<comment type="function">
    <text evidence="1">Specifically methylates the guanine in position 1207 of 16S rRNA in the 30S particle.</text>
</comment>
<comment type="catalytic activity">
    <reaction evidence="1">
        <text>guanosine(1207) in 16S rRNA + S-adenosyl-L-methionine = N(2)-methylguanosine(1207) in 16S rRNA + S-adenosyl-L-homocysteine + H(+)</text>
        <dbReference type="Rhea" id="RHEA:42736"/>
        <dbReference type="Rhea" id="RHEA-COMP:10213"/>
        <dbReference type="Rhea" id="RHEA-COMP:10214"/>
        <dbReference type="ChEBI" id="CHEBI:15378"/>
        <dbReference type="ChEBI" id="CHEBI:57856"/>
        <dbReference type="ChEBI" id="CHEBI:59789"/>
        <dbReference type="ChEBI" id="CHEBI:74269"/>
        <dbReference type="ChEBI" id="CHEBI:74481"/>
        <dbReference type="EC" id="2.1.1.172"/>
    </reaction>
</comment>
<comment type="subunit">
    <text evidence="1">Monomer.</text>
</comment>
<comment type="subcellular location">
    <subcellularLocation>
        <location evidence="1">Cytoplasm</location>
    </subcellularLocation>
</comment>
<comment type="similarity">
    <text evidence="1">Belongs to the methyltransferase superfamily. RsmC family.</text>
</comment>
<keyword id="KW-0963">Cytoplasm</keyword>
<keyword id="KW-0489">Methyltransferase</keyword>
<keyword id="KW-0698">rRNA processing</keyword>
<keyword id="KW-0949">S-adenosyl-L-methionine</keyword>
<keyword id="KW-0808">Transferase</keyword>
<proteinExistence type="inferred from homology"/>
<dbReference type="EC" id="2.1.1.172" evidence="1"/>
<dbReference type="EMBL" id="CP000950">
    <property type="protein sequence ID" value="ACA69903.1"/>
    <property type="molecule type" value="Genomic_DNA"/>
</dbReference>
<dbReference type="RefSeq" id="WP_002209206.1">
    <property type="nucleotide sequence ID" value="NZ_CP009792.1"/>
</dbReference>
<dbReference type="SMR" id="B1JL46"/>
<dbReference type="GeneID" id="57974183"/>
<dbReference type="KEGG" id="ypy:YPK_3636"/>
<dbReference type="PATRIC" id="fig|502800.11.peg.4388"/>
<dbReference type="GO" id="GO:0005737">
    <property type="term" value="C:cytoplasm"/>
    <property type="evidence" value="ECO:0007669"/>
    <property type="project" value="UniProtKB-SubCell"/>
</dbReference>
<dbReference type="GO" id="GO:0052914">
    <property type="term" value="F:16S rRNA (guanine(1207)-N(2))-methyltransferase activity"/>
    <property type="evidence" value="ECO:0007669"/>
    <property type="project" value="UniProtKB-EC"/>
</dbReference>
<dbReference type="GO" id="GO:0003676">
    <property type="term" value="F:nucleic acid binding"/>
    <property type="evidence" value="ECO:0007669"/>
    <property type="project" value="InterPro"/>
</dbReference>
<dbReference type="CDD" id="cd02440">
    <property type="entry name" value="AdoMet_MTases"/>
    <property type="match status" value="1"/>
</dbReference>
<dbReference type="Gene3D" id="3.40.50.150">
    <property type="entry name" value="Vaccinia Virus protein VP39"/>
    <property type="match status" value="2"/>
</dbReference>
<dbReference type="HAMAP" id="MF_01862">
    <property type="entry name" value="16SrRNA_methyltr_C"/>
    <property type="match status" value="1"/>
</dbReference>
<dbReference type="InterPro" id="IPR002052">
    <property type="entry name" value="DNA_methylase_N6_adenine_CS"/>
</dbReference>
<dbReference type="InterPro" id="IPR013675">
    <property type="entry name" value="Mtase_sm_N"/>
</dbReference>
<dbReference type="InterPro" id="IPR023543">
    <property type="entry name" value="rRNA_ssu_MeTfrase_C"/>
</dbReference>
<dbReference type="InterPro" id="IPR046977">
    <property type="entry name" value="RsmC/RlmG"/>
</dbReference>
<dbReference type="InterPro" id="IPR029063">
    <property type="entry name" value="SAM-dependent_MTases_sf"/>
</dbReference>
<dbReference type="InterPro" id="IPR007848">
    <property type="entry name" value="Small_mtfrase_dom"/>
</dbReference>
<dbReference type="NCBIfam" id="NF007023">
    <property type="entry name" value="PRK09489.1"/>
    <property type="match status" value="1"/>
</dbReference>
<dbReference type="PANTHER" id="PTHR47816">
    <property type="entry name" value="RIBOSOMAL RNA SMALL SUBUNIT METHYLTRANSFERASE C"/>
    <property type="match status" value="1"/>
</dbReference>
<dbReference type="PANTHER" id="PTHR47816:SF4">
    <property type="entry name" value="RIBOSOMAL RNA SMALL SUBUNIT METHYLTRANSFERASE C"/>
    <property type="match status" value="1"/>
</dbReference>
<dbReference type="Pfam" id="PF05175">
    <property type="entry name" value="MTS"/>
    <property type="match status" value="1"/>
</dbReference>
<dbReference type="Pfam" id="PF08468">
    <property type="entry name" value="MTS_N"/>
    <property type="match status" value="1"/>
</dbReference>
<dbReference type="SUPFAM" id="SSF53335">
    <property type="entry name" value="S-adenosyl-L-methionine-dependent methyltransferases"/>
    <property type="match status" value="1"/>
</dbReference>
<gene>
    <name evidence="1" type="primary">rsmC</name>
    <name type="ordered locus">YPK_3636</name>
</gene>
<accession>B1JL46</accession>
<name>RSMC_YERPY</name>
<evidence type="ECO:0000255" key="1">
    <source>
        <dbReference type="HAMAP-Rule" id="MF_01862"/>
    </source>
</evidence>
<sequence length="347" mass="37799">MSALTPASEVILRHSDEFIARHVLFAGDLQDALPAQFDAAGVRVHTNQYHHWQLLSNTLEENVQFGLLATAETLAACDTLIYYWPKSKQEAQFQLANLLSILPVGTDIFVVGENRSGVRSAEEMLADFAQLAKIDSARRCGLYHGRLDKQPEFDADAWWESYQVGGVTVKTLPGVFSRDSLDSGSHLLLSTFNEPFKGSVLDVGCGAGVLASVLAQQSPKIKWTLSDVSAAAIEASRATLAVNNIEAQVIASNVYSDIKGRFEMIISNPPFHDGIQTSLTAAEMLIRGATAHLHVGGKLRIVANSFLPYPALLDAAFGSHEVLAQNGRFKVYQATVGRPPRDPKKKR</sequence>
<feature type="chain" id="PRO_0000369808" description="Ribosomal RNA small subunit methyltransferase C">
    <location>
        <begin position="1"/>
        <end position="347"/>
    </location>
</feature>
<organism>
    <name type="scientific">Yersinia pseudotuberculosis serotype O:3 (strain YPIII)</name>
    <dbReference type="NCBI Taxonomy" id="502800"/>
    <lineage>
        <taxon>Bacteria</taxon>
        <taxon>Pseudomonadati</taxon>
        <taxon>Pseudomonadota</taxon>
        <taxon>Gammaproteobacteria</taxon>
        <taxon>Enterobacterales</taxon>
        <taxon>Yersiniaceae</taxon>
        <taxon>Yersinia</taxon>
    </lineage>
</organism>
<protein>
    <recommendedName>
        <fullName evidence="1">Ribosomal RNA small subunit methyltransferase C</fullName>
        <ecNumber evidence="1">2.1.1.172</ecNumber>
    </recommendedName>
    <alternativeName>
        <fullName evidence="1">16S rRNA m2G1207 methyltransferase</fullName>
    </alternativeName>
    <alternativeName>
        <fullName evidence="1">rRNA (guanine-N(2)-)-methyltransferase RsmC</fullName>
    </alternativeName>
</protein>
<reference key="1">
    <citation type="submission" date="2008-02" db="EMBL/GenBank/DDBJ databases">
        <title>Complete sequence of Yersinia pseudotuberculosis YPIII.</title>
        <authorList>
            <consortium name="US DOE Joint Genome Institute"/>
            <person name="Copeland A."/>
            <person name="Lucas S."/>
            <person name="Lapidus A."/>
            <person name="Glavina del Rio T."/>
            <person name="Dalin E."/>
            <person name="Tice H."/>
            <person name="Bruce D."/>
            <person name="Goodwin L."/>
            <person name="Pitluck S."/>
            <person name="Munk A.C."/>
            <person name="Brettin T."/>
            <person name="Detter J.C."/>
            <person name="Han C."/>
            <person name="Tapia R."/>
            <person name="Schmutz J."/>
            <person name="Larimer F."/>
            <person name="Land M."/>
            <person name="Hauser L."/>
            <person name="Challacombe J.F."/>
            <person name="Green L."/>
            <person name="Lindler L.E."/>
            <person name="Nikolich M.P."/>
            <person name="Richardson P."/>
        </authorList>
    </citation>
    <scope>NUCLEOTIDE SEQUENCE [LARGE SCALE GENOMIC DNA]</scope>
    <source>
        <strain>YPIII</strain>
    </source>
</reference>